<accession>Q9X139</accession>
<keyword id="KW-1185">Reference proteome</keyword>
<name>Y1313_THEMA</name>
<protein>
    <recommendedName>
        <fullName>UPF0150 protein TM_1313</fullName>
    </recommendedName>
</protein>
<sequence>MKNVRKIFTAIIEYDPEKKQYVGMVPDVPGVHTVGSSLEEVRRNLKEVLELVLEEAGDEINLQEFVALEMIEVET</sequence>
<feature type="chain" id="PRO_0000157939" description="UPF0150 protein TM_1313">
    <location>
        <begin position="1"/>
        <end position="75"/>
    </location>
</feature>
<evidence type="ECO:0000305" key="1"/>
<comment type="similarity">
    <text evidence="1">Belongs to the UPF0150 family.</text>
</comment>
<reference key="1">
    <citation type="journal article" date="1999" name="Nature">
        <title>Evidence for lateral gene transfer between Archaea and Bacteria from genome sequence of Thermotoga maritima.</title>
        <authorList>
            <person name="Nelson K.E."/>
            <person name="Clayton R.A."/>
            <person name="Gill S.R."/>
            <person name="Gwinn M.L."/>
            <person name="Dodson R.J."/>
            <person name="Haft D.H."/>
            <person name="Hickey E.K."/>
            <person name="Peterson J.D."/>
            <person name="Nelson W.C."/>
            <person name="Ketchum K.A."/>
            <person name="McDonald L.A."/>
            <person name="Utterback T.R."/>
            <person name="Malek J.A."/>
            <person name="Linher K.D."/>
            <person name="Garrett M.M."/>
            <person name="Stewart A.M."/>
            <person name="Cotton M.D."/>
            <person name="Pratt M.S."/>
            <person name="Phillips C.A."/>
            <person name="Richardson D.L."/>
            <person name="Heidelberg J.F."/>
            <person name="Sutton G.G."/>
            <person name="Fleischmann R.D."/>
            <person name="Eisen J.A."/>
            <person name="White O."/>
            <person name="Salzberg S.L."/>
            <person name="Smith H.O."/>
            <person name="Venter J.C."/>
            <person name="Fraser C.M."/>
        </authorList>
    </citation>
    <scope>NUCLEOTIDE SEQUENCE [LARGE SCALE GENOMIC DNA]</scope>
    <source>
        <strain>ATCC 43589 / DSM 3109 / JCM 10099 / NBRC 100826 / MSB8</strain>
    </source>
</reference>
<gene>
    <name type="ordered locus">TM_1313</name>
</gene>
<dbReference type="EMBL" id="AE000512">
    <property type="protein sequence ID" value="AAD36387.1"/>
    <property type="molecule type" value="Genomic_DNA"/>
</dbReference>
<dbReference type="PIR" id="C72271">
    <property type="entry name" value="C72271"/>
</dbReference>
<dbReference type="RefSeq" id="NP_229117.1">
    <property type="nucleotide sequence ID" value="NC_000853.1"/>
</dbReference>
<dbReference type="SMR" id="Q9X139"/>
<dbReference type="STRING" id="243274.TM_1313"/>
<dbReference type="PaxDb" id="243274-THEMA_07780"/>
<dbReference type="EnsemblBacteria" id="AAD36387">
    <property type="protein sequence ID" value="AAD36387"/>
    <property type="gene ID" value="TM_1313"/>
</dbReference>
<dbReference type="KEGG" id="tma:TM1313"/>
<dbReference type="PATRIC" id="fig|243274.5.peg.1327"/>
<dbReference type="eggNOG" id="COG1598">
    <property type="taxonomic scope" value="Bacteria"/>
</dbReference>
<dbReference type="InParanoid" id="Q9X139"/>
<dbReference type="OrthoDB" id="5419659at2"/>
<dbReference type="Proteomes" id="UP000008183">
    <property type="component" value="Chromosome"/>
</dbReference>
<dbReference type="GO" id="GO:0006355">
    <property type="term" value="P:regulation of DNA-templated transcription"/>
    <property type="evidence" value="ECO:0000318"/>
    <property type="project" value="GO_Central"/>
</dbReference>
<dbReference type="Gene3D" id="3.30.160.250">
    <property type="match status" value="1"/>
</dbReference>
<dbReference type="InterPro" id="IPR051404">
    <property type="entry name" value="TA_system_antitoxin"/>
</dbReference>
<dbReference type="InterPro" id="IPR049389">
    <property type="entry name" value="TTHA0281-like"/>
</dbReference>
<dbReference type="InterPro" id="IPR035069">
    <property type="entry name" value="TTHA1013/TTHA0281-like"/>
</dbReference>
<dbReference type="PANTHER" id="PTHR34504">
    <property type="entry name" value="ANTITOXIN HICB"/>
    <property type="match status" value="1"/>
</dbReference>
<dbReference type="PANTHER" id="PTHR34504:SF4">
    <property type="entry name" value="ANTITOXIN HICB"/>
    <property type="match status" value="1"/>
</dbReference>
<dbReference type="Pfam" id="PF21748">
    <property type="entry name" value="UPF0150"/>
    <property type="match status" value="1"/>
</dbReference>
<dbReference type="SUPFAM" id="SSF143100">
    <property type="entry name" value="TTHA1013/TTHA0281-like"/>
    <property type="match status" value="1"/>
</dbReference>
<proteinExistence type="inferred from homology"/>
<organism>
    <name type="scientific">Thermotoga maritima (strain ATCC 43589 / DSM 3109 / JCM 10099 / NBRC 100826 / MSB8)</name>
    <dbReference type="NCBI Taxonomy" id="243274"/>
    <lineage>
        <taxon>Bacteria</taxon>
        <taxon>Thermotogati</taxon>
        <taxon>Thermotogota</taxon>
        <taxon>Thermotogae</taxon>
        <taxon>Thermotogales</taxon>
        <taxon>Thermotogaceae</taxon>
        <taxon>Thermotoga</taxon>
    </lineage>
</organism>